<feature type="chain" id="PRO_1000068750" description="tRNA(Met) cytidine acetate ligase">
    <location>
        <begin position="1"/>
        <end position="409"/>
    </location>
</feature>
<feature type="binding site" evidence="1">
    <location>
        <begin position="7"/>
        <end position="20"/>
    </location>
    <ligand>
        <name>ATP</name>
        <dbReference type="ChEBI" id="CHEBI:30616"/>
    </ligand>
</feature>
<feature type="binding site" evidence="1">
    <location>
        <position position="102"/>
    </location>
    <ligand>
        <name>ATP</name>
        <dbReference type="ChEBI" id="CHEBI:30616"/>
    </ligand>
</feature>
<feature type="binding site" evidence="1">
    <location>
        <position position="169"/>
    </location>
    <ligand>
        <name>ATP</name>
        <dbReference type="ChEBI" id="CHEBI:30616"/>
    </ligand>
</feature>
<feature type="binding site" evidence="1">
    <location>
        <position position="194"/>
    </location>
    <ligand>
        <name>ATP</name>
        <dbReference type="ChEBI" id="CHEBI:30616"/>
    </ligand>
</feature>
<gene>
    <name evidence="1" type="primary">tmcAL</name>
    <name type="ordered locus">CBO2491</name>
    <name type="ordered locus">CLC_2345</name>
</gene>
<name>TMCAL_CLOBH</name>
<protein>
    <recommendedName>
        <fullName evidence="1">tRNA(Met) cytidine acetate ligase</fullName>
        <ecNumber evidence="1">6.3.4.-</ecNumber>
    </recommendedName>
</protein>
<reference key="1">
    <citation type="journal article" date="2007" name="Genome Res.">
        <title>Genome sequence of a proteolytic (Group I) Clostridium botulinum strain Hall A and comparative analysis of the clostridial genomes.</title>
        <authorList>
            <person name="Sebaihia M."/>
            <person name="Peck M.W."/>
            <person name="Minton N.P."/>
            <person name="Thomson N.R."/>
            <person name="Holden M.T.G."/>
            <person name="Mitchell W.J."/>
            <person name="Carter A.T."/>
            <person name="Bentley S.D."/>
            <person name="Mason D.R."/>
            <person name="Crossman L."/>
            <person name="Paul C.J."/>
            <person name="Ivens A."/>
            <person name="Wells-Bennik M.H.J."/>
            <person name="Davis I.J."/>
            <person name="Cerdeno-Tarraga A.M."/>
            <person name="Churcher C."/>
            <person name="Quail M.A."/>
            <person name="Chillingworth T."/>
            <person name="Feltwell T."/>
            <person name="Fraser A."/>
            <person name="Goodhead I."/>
            <person name="Hance Z."/>
            <person name="Jagels K."/>
            <person name="Larke N."/>
            <person name="Maddison M."/>
            <person name="Moule S."/>
            <person name="Mungall K."/>
            <person name="Norbertczak H."/>
            <person name="Rabbinowitsch E."/>
            <person name="Sanders M."/>
            <person name="Simmonds M."/>
            <person name="White B."/>
            <person name="Whithead S."/>
            <person name="Parkhill J."/>
        </authorList>
    </citation>
    <scope>NUCLEOTIDE SEQUENCE [LARGE SCALE GENOMIC DNA]</scope>
    <source>
        <strain>Hall / ATCC 3502 / NCTC 13319 / Type A</strain>
    </source>
</reference>
<reference key="2">
    <citation type="journal article" date="2007" name="PLoS ONE">
        <title>Analysis of the neurotoxin complex genes in Clostridium botulinum A1-A4 and B1 strains: BoNT/A3, /Ba4 and /B1 clusters are located within plasmids.</title>
        <authorList>
            <person name="Smith T.J."/>
            <person name="Hill K.K."/>
            <person name="Foley B.T."/>
            <person name="Detter J.C."/>
            <person name="Munk A.C."/>
            <person name="Bruce D.C."/>
            <person name="Doggett N.A."/>
            <person name="Smith L.A."/>
            <person name="Marks J.D."/>
            <person name="Xie G."/>
            <person name="Brettin T.S."/>
        </authorList>
    </citation>
    <scope>NUCLEOTIDE SEQUENCE [LARGE SCALE GENOMIC DNA]</scope>
    <source>
        <strain>Hall / ATCC 3502 / NCTC 13319 / Type A</strain>
    </source>
</reference>
<organism>
    <name type="scientific">Clostridium botulinum (strain Hall / ATCC 3502 / NCTC 13319 / Type A)</name>
    <dbReference type="NCBI Taxonomy" id="441771"/>
    <lineage>
        <taxon>Bacteria</taxon>
        <taxon>Bacillati</taxon>
        <taxon>Bacillota</taxon>
        <taxon>Clostridia</taxon>
        <taxon>Eubacteriales</taxon>
        <taxon>Clostridiaceae</taxon>
        <taxon>Clostridium</taxon>
    </lineage>
</organism>
<accession>A5I4R8</accession>
<accession>A7G5X3</accession>
<keyword id="KW-0067">ATP-binding</keyword>
<keyword id="KW-0963">Cytoplasm</keyword>
<keyword id="KW-0436">Ligase</keyword>
<keyword id="KW-0547">Nucleotide-binding</keyword>
<keyword id="KW-1185">Reference proteome</keyword>
<keyword id="KW-0694">RNA-binding</keyword>
<keyword id="KW-0819">tRNA processing</keyword>
<keyword id="KW-0820">tRNA-binding</keyword>
<dbReference type="EC" id="6.3.4.-" evidence="1"/>
<dbReference type="EMBL" id="CP000727">
    <property type="protein sequence ID" value="ABS37167.1"/>
    <property type="molecule type" value="Genomic_DNA"/>
</dbReference>
<dbReference type="EMBL" id="AM412317">
    <property type="protein sequence ID" value="CAL84041.1"/>
    <property type="molecule type" value="Genomic_DNA"/>
</dbReference>
<dbReference type="RefSeq" id="WP_003388463.1">
    <property type="nucleotide sequence ID" value="NC_009698.1"/>
</dbReference>
<dbReference type="RefSeq" id="YP_001254985.1">
    <property type="nucleotide sequence ID" value="NC_009495.1"/>
</dbReference>
<dbReference type="RefSeq" id="YP_001388188.1">
    <property type="nucleotide sequence ID" value="NC_009698.1"/>
</dbReference>
<dbReference type="SMR" id="A5I4R8"/>
<dbReference type="GeneID" id="5186746"/>
<dbReference type="KEGG" id="cbh:CLC_2345"/>
<dbReference type="KEGG" id="cbo:CBO2491"/>
<dbReference type="PATRIC" id="fig|413999.7.peg.2468"/>
<dbReference type="HOGENOM" id="CLU_038915_0_1_9"/>
<dbReference type="PRO" id="PR:A5I4R8"/>
<dbReference type="Proteomes" id="UP000001986">
    <property type="component" value="Chromosome"/>
</dbReference>
<dbReference type="GO" id="GO:0005737">
    <property type="term" value="C:cytoplasm"/>
    <property type="evidence" value="ECO:0007669"/>
    <property type="project" value="UniProtKB-SubCell"/>
</dbReference>
<dbReference type="GO" id="GO:0005524">
    <property type="term" value="F:ATP binding"/>
    <property type="evidence" value="ECO:0007669"/>
    <property type="project" value="UniProtKB-KW"/>
</dbReference>
<dbReference type="GO" id="GO:0016879">
    <property type="term" value="F:ligase activity, forming carbon-nitrogen bonds"/>
    <property type="evidence" value="ECO:0007669"/>
    <property type="project" value="UniProtKB-UniRule"/>
</dbReference>
<dbReference type="GO" id="GO:0000049">
    <property type="term" value="F:tRNA binding"/>
    <property type="evidence" value="ECO:0007669"/>
    <property type="project" value="UniProtKB-KW"/>
</dbReference>
<dbReference type="GO" id="GO:0006400">
    <property type="term" value="P:tRNA modification"/>
    <property type="evidence" value="ECO:0007669"/>
    <property type="project" value="UniProtKB-UniRule"/>
</dbReference>
<dbReference type="Gene3D" id="3.40.50.620">
    <property type="entry name" value="HUPs"/>
    <property type="match status" value="1"/>
</dbReference>
<dbReference type="HAMAP" id="MF_01539">
    <property type="entry name" value="TmcAL"/>
    <property type="match status" value="1"/>
</dbReference>
<dbReference type="InterPro" id="IPR014729">
    <property type="entry name" value="Rossmann-like_a/b/a_fold"/>
</dbReference>
<dbReference type="InterPro" id="IPR008513">
    <property type="entry name" value="tRNA(Met)_cyd_acetate_ligase"/>
</dbReference>
<dbReference type="NCBIfam" id="NF010191">
    <property type="entry name" value="PRK13670.1"/>
    <property type="match status" value="1"/>
</dbReference>
<dbReference type="PANTHER" id="PTHR37825">
    <property type="entry name" value="TRNA(MET) CYTIDINE ACETATE LIGASE"/>
    <property type="match status" value="1"/>
</dbReference>
<dbReference type="PANTHER" id="PTHR37825:SF1">
    <property type="entry name" value="TRNA(MET) CYTIDINE ACETATE LIGASE"/>
    <property type="match status" value="1"/>
</dbReference>
<dbReference type="Pfam" id="PF05636">
    <property type="entry name" value="HIGH_NTase1"/>
    <property type="match status" value="1"/>
</dbReference>
<dbReference type="SUPFAM" id="SSF52374">
    <property type="entry name" value="Nucleotidylyl transferase"/>
    <property type="match status" value="1"/>
</dbReference>
<evidence type="ECO:0000255" key="1">
    <source>
        <dbReference type="HAMAP-Rule" id="MF_01539"/>
    </source>
</evidence>
<proteinExistence type="inferred from homology"/>
<sequence>MNVSAIVVEYNPMHNGHLYHIKKTKKLTNCDALVCIMSGNFVQRGFPSILDKWTKANMAISNGVDLVIELPTLYSLSSAEFFSFGAVSILDSLNIINSICFGSEIGNINALQDIATTLLEEPLEYKILLKNYLDKGISFAKARNLALVELNRDNKIMSENINKILSLSNNILGIEYLKSLLLLNSSIKPFTITREGADYKDENLHEEYSSASSIRKYLKENKNINILKDFLPLEGFLEFKRLITKGYNFSMEDSMINYIRYKYISGYKNLHNLIDVSEGLDNRIYKSLEKNFTYDSLVGEIKSKRYAYSRIGRILCQYFIGFENYDLNSLLKSTPNYMRVLASNEMGLKVLKKIKKHSSTNIYTKLPKNTNTLLSLDIKATNAYSLLNNNIRFNEDYFRSPTIIKNTIY</sequence>
<comment type="function">
    <text evidence="1">Catalyzes the formation of N(4)-acetylcytidine (ac(4)C) at the wobble position of elongator tRNA(Met), using acetate and ATP as substrates. First activates an acetate ion to form acetyladenylate (Ac-AMP) and then transfers the acetyl group to tRNA to form ac(4)C34.</text>
</comment>
<comment type="catalytic activity">
    <reaction evidence="1">
        <text>cytidine(34) in elongator tRNA(Met) + acetate + ATP = N(4)-acetylcytidine(34) in elongator tRNA(Met) + AMP + diphosphate</text>
        <dbReference type="Rhea" id="RHEA:58144"/>
        <dbReference type="Rhea" id="RHEA-COMP:10693"/>
        <dbReference type="Rhea" id="RHEA-COMP:10694"/>
        <dbReference type="ChEBI" id="CHEBI:30089"/>
        <dbReference type="ChEBI" id="CHEBI:30616"/>
        <dbReference type="ChEBI" id="CHEBI:33019"/>
        <dbReference type="ChEBI" id="CHEBI:74900"/>
        <dbReference type="ChEBI" id="CHEBI:82748"/>
        <dbReference type="ChEBI" id="CHEBI:456215"/>
    </reaction>
</comment>
<comment type="subcellular location">
    <subcellularLocation>
        <location evidence="1">Cytoplasm</location>
    </subcellularLocation>
</comment>
<comment type="similarity">
    <text evidence="1">Belongs to the TmcAL family.</text>
</comment>